<evidence type="ECO:0000255" key="1">
    <source>
        <dbReference type="HAMAP-Rule" id="MF_00518"/>
    </source>
</evidence>
<comment type="function">
    <text evidence="1">An aminoacyl-tRNA editing enzyme that deacylates mischarged D-aminoacyl-tRNAs. Also deacylates mischarged glycyl-tRNA(Ala), protecting cells against glycine mischarging by AlaRS. Acts via tRNA-based rather than protein-based catalysis; rejects L-amino acids rather than detecting D-amino acids in the active site. By recycling D-aminoacyl-tRNA to D-amino acids and free tRNA molecules, this enzyme counteracts the toxicity associated with the formation of D-aminoacyl-tRNA entities in vivo and helps enforce protein L-homochirality.</text>
</comment>
<comment type="catalytic activity">
    <reaction evidence="1">
        <text>glycyl-tRNA(Ala) + H2O = tRNA(Ala) + glycine + H(+)</text>
        <dbReference type="Rhea" id="RHEA:53744"/>
        <dbReference type="Rhea" id="RHEA-COMP:9657"/>
        <dbReference type="Rhea" id="RHEA-COMP:13640"/>
        <dbReference type="ChEBI" id="CHEBI:15377"/>
        <dbReference type="ChEBI" id="CHEBI:15378"/>
        <dbReference type="ChEBI" id="CHEBI:57305"/>
        <dbReference type="ChEBI" id="CHEBI:78442"/>
        <dbReference type="ChEBI" id="CHEBI:78522"/>
        <dbReference type="EC" id="3.1.1.96"/>
    </reaction>
</comment>
<comment type="catalytic activity">
    <reaction evidence="1">
        <text>a D-aminoacyl-tRNA + H2O = a tRNA + a D-alpha-amino acid + H(+)</text>
        <dbReference type="Rhea" id="RHEA:13953"/>
        <dbReference type="Rhea" id="RHEA-COMP:10123"/>
        <dbReference type="Rhea" id="RHEA-COMP:10124"/>
        <dbReference type="ChEBI" id="CHEBI:15377"/>
        <dbReference type="ChEBI" id="CHEBI:15378"/>
        <dbReference type="ChEBI" id="CHEBI:59871"/>
        <dbReference type="ChEBI" id="CHEBI:78442"/>
        <dbReference type="ChEBI" id="CHEBI:79333"/>
        <dbReference type="EC" id="3.1.1.96"/>
    </reaction>
</comment>
<comment type="subunit">
    <text evidence="1">Homodimer.</text>
</comment>
<comment type="subcellular location">
    <subcellularLocation>
        <location evidence="1">Cytoplasm</location>
    </subcellularLocation>
</comment>
<comment type="domain">
    <text evidence="1">A Gly-cisPro motif from one monomer fits into the active site of the other monomer to allow specific chiral rejection of L-amino acids.</text>
</comment>
<comment type="similarity">
    <text evidence="1">Belongs to the DTD family.</text>
</comment>
<reference key="1">
    <citation type="journal article" date="2011" name="J. Bacteriol.">
        <title>Complete genome sequence of the Thermophilic Bacterium Exiguobacterium sp. AT1b.</title>
        <authorList>
            <person name="Vishnivetskaya T.A."/>
            <person name="Lucas S."/>
            <person name="Copeland A."/>
            <person name="Lapidus A."/>
            <person name="Glavina del Rio T."/>
            <person name="Dalin E."/>
            <person name="Tice H."/>
            <person name="Bruce D.C."/>
            <person name="Goodwin L.A."/>
            <person name="Pitluck S."/>
            <person name="Saunders E."/>
            <person name="Brettin T."/>
            <person name="Detter C."/>
            <person name="Han C."/>
            <person name="Larimer F."/>
            <person name="Land M.L."/>
            <person name="Hauser L.J."/>
            <person name="Kyrpides N.C."/>
            <person name="Ovchinnikova G."/>
            <person name="Kathariou S."/>
            <person name="Ramaley R.F."/>
            <person name="Rodrigues D.F."/>
            <person name="Hendrix C."/>
            <person name="Richardson P."/>
            <person name="Tiedje J.M."/>
        </authorList>
    </citation>
    <scope>NUCLEOTIDE SEQUENCE [LARGE SCALE GENOMIC DNA]</scope>
    <source>
        <strain>ATCC BAA-1283 / AT1b</strain>
    </source>
</reference>
<dbReference type="EC" id="3.1.1.96" evidence="1"/>
<dbReference type="EMBL" id="CP001615">
    <property type="protein sequence ID" value="ACQ71618.1"/>
    <property type="molecule type" value="Genomic_DNA"/>
</dbReference>
<dbReference type="RefSeq" id="WP_015881177.1">
    <property type="nucleotide sequence ID" value="NC_012673.1"/>
</dbReference>
<dbReference type="SMR" id="C4L533"/>
<dbReference type="STRING" id="360911.EAT1b_2703"/>
<dbReference type="KEGG" id="eat:EAT1b_2703"/>
<dbReference type="eggNOG" id="COG1490">
    <property type="taxonomic scope" value="Bacteria"/>
</dbReference>
<dbReference type="HOGENOM" id="CLU_076901_1_0_9"/>
<dbReference type="OrthoDB" id="9801395at2"/>
<dbReference type="Proteomes" id="UP000000716">
    <property type="component" value="Chromosome"/>
</dbReference>
<dbReference type="GO" id="GO:0005737">
    <property type="term" value="C:cytoplasm"/>
    <property type="evidence" value="ECO:0007669"/>
    <property type="project" value="UniProtKB-SubCell"/>
</dbReference>
<dbReference type="GO" id="GO:0051500">
    <property type="term" value="F:D-tyrosyl-tRNA(Tyr) deacylase activity"/>
    <property type="evidence" value="ECO:0007669"/>
    <property type="project" value="TreeGrafter"/>
</dbReference>
<dbReference type="GO" id="GO:0106026">
    <property type="term" value="F:Gly-tRNA(Ala) deacylase activity"/>
    <property type="evidence" value="ECO:0007669"/>
    <property type="project" value="UniProtKB-UniRule"/>
</dbReference>
<dbReference type="GO" id="GO:0043908">
    <property type="term" value="F:Ser(Gly)-tRNA(Ala) hydrolase activity"/>
    <property type="evidence" value="ECO:0007669"/>
    <property type="project" value="UniProtKB-UniRule"/>
</dbReference>
<dbReference type="GO" id="GO:0000049">
    <property type="term" value="F:tRNA binding"/>
    <property type="evidence" value="ECO:0007669"/>
    <property type="project" value="UniProtKB-UniRule"/>
</dbReference>
<dbReference type="GO" id="GO:0019478">
    <property type="term" value="P:D-amino acid catabolic process"/>
    <property type="evidence" value="ECO:0007669"/>
    <property type="project" value="UniProtKB-UniRule"/>
</dbReference>
<dbReference type="CDD" id="cd00563">
    <property type="entry name" value="Dtyr_deacylase"/>
    <property type="match status" value="1"/>
</dbReference>
<dbReference type="FunFam" id="3.50.80.10:FF:000001">
    <property type="entry name" value="D-aminoacyl-tRNA deacylase"/>
    <property type="match status" value="1"/>
</dbReference>
<dbReference type="Gene3D" id="3.50.80.10">
    <property type="entry name" value="D-tyrosyl-tRNA(Tyr) deacylase"/>
    <property type="match status" value="1"/>
</dbReference>
<dbReference type="HAMAP" id="MF_00518">
    <property type="entry name" value="Deacylase_Dtd"/>
    <property type="match status" value="1"/>
</dbReference>
<dbReference type="InterPro" id="IPR003732">
    <property type="entry name" value="Daa-tRNA_deacyls_DTD"/>
</dbReference>
<dbReference type="InterPro" id="IPR023509">
    <property type="entry name" value="DTD-like_sf"/>
</dbReference>
<dbReference type="NCBIfam" id="TIGR00256">
    <property type="entry name" value="D-aminoacyl-tRNA deacylase"/>
    <property type="match status" value="1"/>
</dbReference>
<dbReference type="PANTHER" id="PTHR10472:SF5">
    <property type="entry name" value="D-AMINOACYL-TRNA DEACYLASE 1"/>
    <property type="match status" value="1"/>
</dbReference>
<dbReference type="PANTHER" id="PTHR10472">
    <property type="entry name" value="D-TYROSYL-TRNA TYR DEACYLASE"/>
    <property type="match status" value="1"/>
</dbReference>
<dbReference type="Pfam" id="PF02580">
    <property type="entry name" value="Tyr_Deacylase"/>
    <property type="match status" value="1"/>
</dbReference>
<dbReference type="SUPFAM" id="SSF69500">
    <property type="entry name" value="DTD-like"/>
    <property type="match status" value="1"/>
</dbReference>
<protein>
    <recommendedName>
        <fullName evidence="1">D-aminoacyl-tRNA deacylase</fullName>
        <shortName evidence="1">DTD</shortName>
        <ecNumber evidence="1">3.1.1.96</ecNumber>
    </recommendedName>
    <alternativeName>
        <fullName evidence="1">Gly-tRNA(Ala) deacylase</fullName>
    </alternativeName>
</protein>
<gene>
    <name evidence="1" type="primary">dtd</name>
    <name type="ordered locus">EAT1b_2703</name>
</gene>
<feature type="chain" id="PRO_1000211729" description="D-aminoacyl-tRNA deacylase">
    <location>
        <begin position="1"/>
        <end position="147"/>
    </location>
</feature>
<feature type="short sequence motif" description="Gly-cisPro motif, important for rejection of L-amino acids" evidence="1">
    <location>
        <begin position="137"/>
        <end position="138"/>
    </location>
</feature>
<organism>
    <name type="scientific">Exiguobacterium sp. (strain ATCC BAA-1283 / AT1b)</name>
    <dbReference type="NCBI Taxonomy" id="360911"/>
    <lineage>
        <taxon>Bacteria</taxon>
        <taxon>Bacillati</taxon>
        <taxon>Bacillota</taxon>
        <taxon>Bacilli</taxon>
        <taxon>Bacillales</taxon>
        <taxon>Bacillales Family XII. Incertae Sedis</taxon>
        <taxon>Exiguobacterium</taxon>
    </lineage>
</organism>
<name>DTD_EXISA</name>
<proteinExistence type="inferred from homology"/>
<sequence>MRVLLQRVKEASVTVEEEVVGAINAGYLLLVGVTHEDTEEEVNWLADKVTGLRVFEDDQEKMNLSIQDVSGQILSVSQFTLYGDTMKGRRPAFTKAAKPDMAETLYEKFNERLRANGLIVETGRFGAMMDVALVNDGPVTLMLEKNA</sequence>
<accession>C4L533</accession>
<keyword id="KW-0963">Cytoplasm</keyword>
<keyword id="KW-0378">Hydrolase</keyword>
<keyword id="KW-0694">RNA-binding</keyword>
<keyword id="KW-0820">tRNA-binding</keyword>